<keyword id="KW-0012">Acyltransferase</keyword>
<keyword id="KW-0093">Biotin biosynthesis</keyword>
<keyword id="KW-0663">Pyridoxal phosphate</keyword>
<keyword id="KW-1185">Reference proteome</keyword>
<keyword id="KW-0808">Transferase</keyword>
<name>BIOF_COPPD</name>
<feature type="chain" id="PRO_0000380957" description="8-amino-7-oxononanoate synthase">
    <location>
        <begin position="1"/>
        <end position="393"/>
    </location>
</feature>
<feature type="binding site" evidence="1">
    <location>
        <begin position="107"/>
        <end position="108"/>
    </location>
    <ligand>
        <name>pyridoxal 5'-phosphate</name>
        <dbReference type="ChEBI" id="CHEBI:597326"/>
    </ligand>
</feature>
<feature type="binding site" evidence="1">
    <location>
        <position position="132"/>
    </location>
    <ligand>
        <name>substrate</name>
    </ligand>
</feature>
<feature type="binding site" evidence="1">
    <location>
        <position position="180"/>
    </location>
    <ligand>
        <name>pyridoxal 5'-phosphate</name>
        <dbReference type="ChEBI" id="CHEBI:597326"/>
    </ligand>
</feature>
<feature type="binding site" evidence="1">
    <location>
        <begin position="205"/>
        <end position="208"/>
    </location>
    <ligand>
        <name>pyridoxal 5'-phosphate</name>
        <dbReference type="ChEBI" id="CHEBI:597326"/>
    </ligand>
</feature>
<feature type="binding site" evidence="1">
    <location>
        <begin position="236"/>
        <end position="239"/>
    </location>
    <ligand>
        <name>pyridoxal 5'-phosphate</name>
        <dbReference type="ChEBI" id="CHEBI:597326"/>
    </ligand>
</feature>
<feature type="binding site" evidence="1">
    <location>
        <position position="353"/>
    </location>
    <ligand>
        <name>substrate</name>
    </ligand>
</feature>
<feature type="modified residue" description="N6-(pyridoxal phosphate)lysine" evidence="1">
    <location>
        <position position="239"/>
    </location>
</feature>
<sequence length="393" mass="43172">MPVEEFERELNERREQGLYVTIRKIGSPQGAWIIVDGKKVLNLSSNNYLGFANHPRLKEAAKKGIDDYGAGPAAVRTIAGDQLPQEKLEEMLAEFKGAEAAVLYQSGFCANLGTIPALVGEGDAIFSDELNHASIIDGCRLSRAKIIRYPHLNVQTLEELLKQERQNYKKAMIITDGVFSMDGDIAPMDKLADLADKYQCILYVDDAHGEGVLGDSGRGIVDYFGLQGRVDVEIGTLSKAFGVVGGFAAGSKLLAELLKQKARPLLFSSAPTAADVYASMEAVRILQESDELVKKLWENANYFKEHMRKAGFDLGNSQTPITPVMIGDEITTQEFSKKLFERNVFAQAISYPTVPKGKARMRVMISATHSRDDLDFAVEQFTAVGKELGVIQS</sequence>
<comment type="function">
    <text evidence="1">Catalyzes the decarboxylative condensation of pimeloyl-[acyl-carrier protein] and L-alanine to produce 8-amino-7-oxononanoate (AON), [acyl-carrier protein], and carbon dioxide.</text>
</comment>
<comment type="catalytic activity">
    <reaction>
        <text>6-carboxyhexanoyl-[ACP] + L-alanine + H(+) = (8S)-8-amino-7-oxononanoate + holo-[ACP] + CO2</text>
        <dbReference type="Rhea" id="RHEA:42288"/>
        <dbReference type="Rhea" id="RHEA-COMP:9685"/>
        <dbReference type="Rhea" id="RHEA-COMP:9955"/>
        <dbReference type="ChEBI" id="CHEBI:15378"/>
        <dbReference type="ChEBI" id="CHEBI:16526"/>
        <dbReference type="ChEBI" id="CHEBI:57972"/>
        <dbReference type="ChEBI" id="CHEBI:64479"/>
        <dbReference type="ChEBI" id="CHEBI:78846"/>
        <dbReference type="ChEBI" id="CHEBI:149468"/>
        <dbReference type="EC" id="2.3.1.47"/>
    </reaction>
</comment>
<comment type="cofactor">
    <cofactor evidence="1">
        <name>pyridoxal 5'-phosphate</name>
        <dbReference type="ChEBI" id="CHEBI:597326"/>
    </cofactor>
</comment>
<comment type="pathway">
    <text>Cofactor biosynthesis; biotin biosynthesis.</text>
</comment>
<comment type="subunit">
    <text evidence="1">Homodimer.</text>
</comment>
<comment type="similarity">
    <text evidence="2">Belongs to the class-II pyridoxal-phosphate-dependent aminotransferase family. BioF subfamily.</text>
</comment>
<comment type="sequence caution" evidence="2">
    <conflict type="erroneous initiation">
        <sequence resource="EMBL-CDS" id="ACI18052"/>
    </conflict>
    <text>Extended N-terminus.</text>
</comment>
<accession>B5Y9Z4</accession>
<evidence type="ECO:0000250" key="1"/>
<evidence type="ECO:0000305" key="2"/>
<protein>
    <recommendedName>
        <fullName>8-amino-7-oxononanoate synthase</fullName>
        <shortName>AONS</shortName>
        <ecNumber>2.3.1.47</ecNumber>
    </recommendedName>
    <alternativeName>
        <fullName>7-keto-8-amino-pelargonic acid synthase</fullName>
        <shortName>7-KAP synthase</shortName>
        <shortName>KAPA synthase</shortName>
    </alternativeName>
    <alternativeName>
        <fullName>8-amino-7-ketopelargonate synthase</fullName>
    </alternativeName>
    <alternativeName>
        <fullName>Alpha-oxoamine synthase</fullName>
    </alternativeName>
</protein>
<organism>
    <name type="scientific">Coprothermobacter proteolyticus (strain ATCC 35245 / DSM 5265 / OCM 4 / BT)</name>
    <dbReference type="NCBI Taxonomy" id="309798"/>
    <lineage>
        <taxon>Bacteria</taxon>
        <taxon>Pseudomonadati</taxon>
        <taxon>Coprothermobacterota</taxon>
        <taxon>Coprothermobacteria</taxon>
        <taxon>Coprothermobacterales</taxon>
        <taxon>Coprothermobacteraceae</taxon>
        <taxon>Coprothermobacter</taxon>
    </lineage>
</organism>
<reference key="1">
    <citation type="submission" date="2008-08" db="EMBL/GenBank/DDBJ databases">
        <title>The complete genome sequence of Coprothermobacter proteolyticus strain ATCC 5245 / DSM 5265 / BT.</title>
        <authorList>
            <person name="Dodson R.J."/>
            <person name="Durkin A.S."/>
            <person name="Wu M."/>
            <person name="Eisen J."/>
            <person name="Sutton G."/>
        </authorList>
    </citation>
    <scope>NUCLEOTIDE SEQUENCE [LARGE SCALE GENOMIC DNA]</scope>
    <source>
        <strain>ATCC 35245 / DSM 5265 / OCM 4 / BT</strain>
    </source>
</reference>
<proteinExistence type="inferred from homology"/>
<gene>
    <name type="ordered locus">COPRO5265_1289</name>
</gene>
<dbReference type="EC" id="2.3.1.47"/>
<dbReference type="EMBL" id="CP001145">
    <property type="protein sequence ID" value="ACI18052.1"/>
    <property type="status" value="ALT_INIT"/>
    <property type="molecule type" value="Genomic_DNA"/>
</dbReference>
<dbReference type="RefSeq" id="WP_012544702.1">
    <property type="nucleotide sequence ID" value="NC_011295.1"/>
</dbReference>
<dbReference type="SMR" id="B5Y9Z4"/>
<dbReference type="STRING" id="309798.COPRO5265_1289"/>
<dbReference type="KEGG" id="cpo:COPRO5265_1289"/>
<dbReference type="eggNOG" id="COG0156">
    <property type="taxonomic scope" value="Bacteria"/>
</dbReference>
<dbReference type="HOGENOM" id="CLU_015846_11_0_9"/>
<dbReference type="OrthoDB" id="9807157at2"/>
<dbReference type="UniPathway" id="UPA00078"/>
<dbReference type="Proteomes" id="UP000001732">
    <property type="component" value="Chromosome"/>
</dbReference>
<dbReference type="GO" id="GO:0008710">
    <property type="term" value="F:8-amino-7-oxononanoate synthase activity"/>
    <property type="evidence" value="ECO:0000250"/>
    <property type="project" value="UniProtKB"/>
</dbReference>
<dbReference type="GO" id="GO:0008890">
    <property type="term" value="F:glycine C-acetyltransferase activity"/>
    <property type="evidence" value="ECO:0000250"/>
    <property type="project" value="UniProtKB"/>
</dbReference>
<dbReference type="GO" id="GO:0030170">
    <property type="term" value="F:pyridoxal phosphate binding"/>
    <property type="evidence" value="ECO:0000250"/>
    <property type="project" value="UniProtKB"/>
</dbReference>
<dbReference type="GO" id="GO:0009102">
    <property type="term" value="P:biotin biosynthetic process"/>
    <property type="evidence" value="ECO:0000250"/>
    <property type="project" value="UniProtKB"/>
</dbReference>
<dbReference type="CDD" id="cd06454">
    <property type="entry name" value="KBL_like"/>
    <property type="match status" value="1"/>
</dbReference>
<dbReference type="FunFam" id="3.90.1150.10:FF:000004">
    <property type="entry name" value="2-amino-3-ketobutyrate coenzyme A ligase"/>
    <property type="match status" value="1"/>
</dbReference>
<dbReference type="FunFam" id="3.40.640.10:FF:000006">
    <property type="entry name" value="5-aminolevulinate synthase, mitochondrial"/>
    <property type="match status" value="1"/>
</dbReference>
<dbReference type="Gene3D" id="3.90.1150.10">
    <property type="entry name" value="Aspartate Aminotransferase, domain 1"/>
    <property type="match status" value="1"/>
</dbReference>
<dbReference type="Gene3D" id="3.40.640.10">
    <property type="entry name" value="Type I PLP-dependent aspartate aminotransferase-like (Major domain)"/>
    <property type="match status" value="1"/>
</dbReference>
<dbReference type="InterPro" id="IPR001917">
    <property type="entry name" value="Aminotrans_II_pyridoxalP_BS"/>
</dbReference>
<dbReference type="InterPro" id="IPR004839">
    <property type="entry name" value="Aminotransferase_I/II_large"/>
</dbReference>
<dbReference type="InterPro" id="IPR050087">
    <property type="entry name" value="AON_synthase_class-II"/>
</dbReference>
<dbReference type="InterPro" id="IPR010962">
    <property type="entry name" value="AONS_Archaea/Firmicutes"/>
</dbReference>
<dbReference type="InterPro" id="IPR004723">
    <property type="entry name" value="AONS_Archaea/Proteobacteria"/>
</dbReference>
<dbReference type="InterPro" id="IPR015424">
    <property type="entry name" value="PyrdxlP-dep_Trfase"/>
</dbReference>
<dbReference type="InterPro" id="IPR015421">
    <property type="entry name" value="PyrdxlP-dep_Trfase_major"/>
</dbReference>
<dbReference type="InterPro" id="IPR015422">
    <property type="entry name" value="PyrdxlP-dep_Trfase_small"/>
</dbReference>
<dbReference type="NCBIfam" id="TIGR00858">
    <property type="entry name" value="bioF"/>
    <property type="match status" value="1"/>
</dbReference>
<dbReference type="NCBIfam" id="TIGR01825">
    <property type="entry name" value="gly_Cac_T_rel"/>
    <property type="match status" value="1"/>
</dbReference>
<dbReference type="NCBIfam" id="NF005394">
    <property type="entry name" value="PRK06939.1"/>
    <property type="match status" value="1"/>
</dbReference>
<dbReference type="PANTHER" id="PTHR13693">
    <property type="entry name" value="CLASS II AMINOTRANSFERASE/8-AMINO-7-OXONONANOATE SYNTHASE"/>
    <property type="match status" value="1"/>
</dbReference>
<dbReference type="PANTHER" id="PTHR13693:SF3">
    <property type="entry name" value="LD36009P"/>
    <property type="match status" value="1"/>
</dbReference>
<dbReference type="Pfam" id="PF00155">
    <property type="entry name" value="Aminotran_1_2"/>
    <property type="match status" value="1"/>
</dbReference>
<dbReference type="SUPFAM" id="SSF53383">
    <property type="entry name" value="PLP-dependent transferases"/>
    <property type="match status" value="1"/>
</dbReference>
<dbReference type="PROSITE" id="PS00599">
    <property type="entry name" value="AA_TRANSFER_CLASS_2"/>
    <property type="match status" value="1"/>
</dbReference>